<reference evidence="7" key="1">
    <citation type="journal article" date="2010" name="J. Biol. Chem.">
        <title>Dipetalodipin, a novel multifunctional salivary lipocalin that inhibits platelet aggregation, vasoconstriction, and angiogenesis through unique binding specificity for TXA2, PGF2alpha, and 15(S)-HETE.</title>
        <authorList>
            <person name="Assumpcao T.C."/>
            <person name="Alvarenga P.H."/>
            <person name="Ribeiro J.M."/>
            <person name="Andersen J.F."/>
            <person name="Francischetti I.M."/>
        </authorList>
    </citation>
    <scope>NUCLEOTIDE SEQUENCE [MRNA]</scope>
    <scope>PROTEIN SEQUENCE OF 19-38</scope>
    <scope>SUBCELLULAR LOCATION</scope>
    <scope>TISSUE SPECIFICITY</scope>
    <scope>3D-STRUCTURE MODELING</scope>
    <source>
        <tissue>Salivary gland</tissue>
    </source>
</reference>
<reference evidence="7" key="2">
    <citation type="journal article" date="2011" name="J. Proteome Res.">
        <title>Insight into the salivary transcriptome and proteome of Dipetalogaster maxima.</title>
        <authorList>
            <person name="Assumpcao T.C."/>
            <person name="Charneau S."/>
            <person name="Santiago P.B."/>
            <person name="Francischetti I.M."/>
            <person name="Meng Z."/>
            <person name="Araujo C.N."/>
            <person name="Pham V.M."/>
            <person name="Queiroz R.M."/>
            <person name="de Castro C.N."/>
            <person name="Ricart C.A."/>
            <person name="Santana J.M."/>
            <person name="Ribeiro J.M."/>
        </authorList>
    </citation>
    <scope>NUCLEOTIDE SEQUENCE [MRNA]</scope>
    <source>
        <tissue>Salivary gland</tissue>
    </source>
</reference>
<reference key="3">
    <citation type="journal article" date="2015" name="PLoS Negl. Trop. Dis.">
        <title>Salivary thromboxane A2-binding proteins from triatomine vectors of Chagas disease inhibit platelet-mediated neutrophil extracellular traps (NETs) formation and arterial thrombosis.</title>
        <authorList>
            <person name="Mizurini D.M."/>
            <person name="Aslan J.S."/>
            <person name="Gomes T."/>
            <person name="Ma D."/>
            <person name="Francischetti I.M."/>
            <person name="Monteiro R.Q."/>
        </authorList>
    </citation>
    <scope>FUNCTION</scope>
    <scope>RECOMBINANT EXPRESSION</scope>
</reference>
<name>DPTL_DIPMA</name>
<sequence>MKTIIAAIFLGILMHAFAKECTLMAAASNFNSDKYFDVPHVYVTHSKNGPKEKVCREYNTTKNSDKTTSTTVVTLKTGGTQSIVLSCNNSPKSGVKGQYFMDCQVPGGTGGINIQLESSIIATDNKNYALVHFCPITGRGVTEDIVVLQTNKDNVDPGVTSAIKNYGWSLENWKSRKDAGCQ</sequence>
<comment type="function">
    <text evidence="2 3">Inhibits platelet aggregation, vasoconstriction, and angiogenesis through binding to distinct eicosanoids involved in inflammation (acts as a scavenger), and has a role in inhibiting host innate immunity by impairing platelet-assisted formation of neutrophil extracellular traps (NETs) (PubMed:20889972, PubMed:26110417). Inhibits platelet aggregation by collagen (IC(50)=30 nM), thromboxane A2 mimetic (TXA2 mimetic), or arachidonic acid (AA) without affecting aggregation induced by ADP, convulxin (GP6 agonist), PMA, and ristocetin (vWF-dependent platelet agglutinator) (PubMed:20889972, PubMed:26110417). Binds with high affinity to TXA2, TXB2, prostaglandine H2 mimetic (PGH2 mimetic), PGD2, PGJ2, and PGF2alpha (PubMed:20889972). Also interacts with 15(S)-hydroxyeicosatetraenoic acid (HETE), being the first calycin/lipocalin described to date to bind to a derivative of 15-lipoxygenase (PubMed:20889972). Binding is not observed to other prostaglandins, leukotrienes, HETEs, lipids, and biogenic amines (PubMed:20889972). It prevents contraction of rat uterus stimulated by PGF2alpha and induces relaxation of aorta previously contracted with TXA2 mimetic (PubMed:20889972). In addition, it inhibits angiogenesis mediated by 15(S)-HETE and does not enhance inhibition of collagen-induced platelet aggregation by SQ29548 (TXA2 antagonist) and indomethacin (PubMed:20889972). Also impairs platelet-assisted formation of neutrophil extracellular traps (NETs) (PubMed:26110417). NETs are web-like structures of DNA and proteins that play an important role in killing of pathogens (PubMed:26110417). In addition, NETs are implicated in thrombus formation (PubMed:26110417). In vivo, this protein exhibits antithrombotic activity in two distinct mice models that are highly dependent on platelets (PubMed:26110417). It is noteworthy that it inhibits thrombosis without promoting excessive bleeding (PubMed:26110417).</text>
</comment>
<comment type="subcellular location">
    <subcellularLocation>
        <location evidence="2">Secreted</location>
    </subcellularLocation>
</comment>
<comment type="tissue specificity">
    <text evidence="6">Expressed in salivary glands.</text>
</comment>
<comment type="miscellaneous">
    <text evidence="2">Very abundant protein in the salivary gland, accounting for at least 30% of total salivary lipocalins.</text>
</comment>
<comment type="similarity">
    <text evidence="5">Belongs to the calycin superfamily. Triabin family.</text>
</comment>
<protein>
    <recommendedName>
        <fullName evidence="4">Dipetalodipin</fullName>
        <shortName evidence="4">DPTL</shortName>
    </recommendedName>
    <alternativeName>
        <fullName evidence="7">Salivary lipocalin</fullName>
    </alternativeName>
</protein>
<evidence type="ECO:0000250" key="1">
    <source>
        <dbReference type="UniProtKB" id="Q27049"/>
    </source>
</evidence>
<evidence type="ECO:0000269" key="2">
    <source>
    </source>
</evidence>
<evidence type="ECO:0000269" key="3">
    <source>
    </source>
</evidence>
<evidence type="ECO:0000303" key="4">
    <source>
    </source>
</evidence>
<evidence type="ECO:0000305" key="5"/>
<evidence type="ECO:0000305" key="6">
    <source>
    </source>
</evidence>
<evidence type="ECO:0000312" key="7">
    <source>
        <dbReference type="EMBL" id="AEM97974.1"/>
    </source>
</evidence>
<accession>G3CJS0</accession>
<proteinExistence type="evidence at protein level"/>
<keyword id="KW-0903">Direct protein sequencing</keyword>
<keyword id="KW-1015">Disulfide bond</keyword>
<keyword id="KW-1199">Hemostasis impairing toxin</keyword>
<keyword id="KW-1201">Platelet aggregation inhibiting toxin</keyword>
<keyword id="KW-0964">Secreted</keyword>
<keyword id="KW-0732">Signal</keyword>
<keyword id="KW-0800">Toxin</keyword>
<keyword id="KW-0838">Vasoactive</keyword>
<keyword id="KW-0839">Vasoconstrictor</keyword>
<dbReference type="EMBL" id="HP639837">
    <property type="protein sequence ID" value="AEM97974.1"/>
    <property type="molecule type" value="mRNA"/>
</dbReference>
<dbReference type="SMR" id="G3CJS0"/>
<dbReference type="GO" id="GO:0005576">
    <property type="term" value="C:extracellular region"/>
    <property type="evidence" value="ECO:0007669"/>
    <property type="project" value="UniProtKB-SubCell"/>
</dbReference>
<dbReference type="GO" id="GO:0090729">
    <property type="term" value="F:toxin activity"/>
    <property type="evidence" value="ECO:0007669"/>
    <property type="project" value="UniProtKB-KW"/>
</dbReference>
<dbReference type="GO" id="GO:0030682">
    <property type="term" value="P:symbiont-mediated perturbation of host defenses"/>
    <property type="evidence" value="ECO:0007669"/>
    <property type="project" value="InterPro"/>
</dbReference>
<dbReference type="GO" id="GO:0042310">
    <property type="term" value="P:vasoconstriction"/>
    <property type="evidence" value="ECO:0007669"/>
    <property type="project" value="UniProtKB-KW"/>
</dbReference>
<dbReference type="CDD" id="cd19423">
    <property type="entry name" value="lipocalin_LTBP1-like"/>
    <property type="match status" value="1"/>
</dbReference>
<dbReference type="Gene3D" id="2.40.128.20">
    <property type="match status" value="1"/>
</dbReference>
<dbReference type="InterPro" id="IPR012674">
    <property type="entry name" value="Calycin"/>
</dbReference>
<dbReference type="InterPro" id="IPR005657">
    <property type="entry name" value="Triabi/Procalin"/>
</dbReference>
<dbReference type="Pfam" id="PF03973">
    <property type="entry name" value="Triabin"/>
    <property type="match status" value="1"/>
</dbReference>
<dbReference type="SUPFAM" id="SSF50814">
    <property type="entry name" value="Lipocalins"/>
    <property type="match status" value="1"/>
</dbReference>
<organism>
    <name type="scientific">Dipetalogaster maximus</name>
    <name type="common">Blood-sucking bug</name>
    <dbReference type="NCBI Taxonomy" id="72496"/>
    <lineage>
        <taxon>Eukaryota</taxon>
        <taxon>Metazoa</taxon>
        <taxon>Ecdysozoa</taxon>
        <taxon>Arthropoda</taxon>
        <taxon>Hexapoda</taxon>
        <taxon>Insecta</taxon>
        <taxon>Pterygota</taxon>
        <taxon>Neoptera</taxon>
        <taxon>Paraneoptera</taxon>
        <taxon>Hemiptera</taxon>
        <taxon>Heteroptera</taxon>
        <taxon>Panheteroptera</taxon>
        <taxon>Cimicomorpha</taxon>
        <taxon>Reduviidae</taxon>
        <taxon>Triatominae</taxon>
        <taxon>Dipetalogaster</taxon>
    </lineage>
</organism>
<feature type="signal peptide" evidence="6">
    <location>
        <begin position="1"/>
        <end position="18"/>
    </location>
</feature>
<feature type="chain" id="PRO_5003443009" description="Dipetalodipin" evidence="6">
    <location>
        <begin position="19"/>
        <end position="182"/>
    </location>
</feature>
<feature type="disulfide bond" evidence="1">
    <location>
        <begin position="21"/>
        <end position="134"/>
    </location>
</feature>
<feature type="disulfide bond" evidence="1">
    <location>
        <begin position="55"/>
        <end position="181"/>
    </location>
</feature>
<feature type="disulfide bond" evidence="1">
    <location>
        <begin position="87"/>
        <end position="103"/>
    </location>
</feature>